<proteinExistence type="evidence at protein level"/>
<name>ALKX_MYCTU</name>
<keyword id="KW-0002">3D-structure</keyword>
<keyword id="KW-0963">Cytoplasm</keyword>
<keyword id="KW-0238">DNA-binding</keyword>
<keyword id="KW-1185">Reference proteome</keyword>
<keyword id="KW-0678">Repressor</keyword>
<keyword id="KW-0804">Transcription</keyword>
<keyword id="KW-0805">Transcription regulation</keyword>
<reference key="1">
    <citation type="journal article" date="1998" name="Nature">
        <title>Deciphering the biology of Mycobacterium tuberculosis from the complete genome sequence.</title>
        <authorList>
            <person name="Cole S.T."/>
            <person name="Brosch R."/>
            <person name="Parkhill J."/>
            <person name="Garnier T."/>
            <person name="Churcher C.M."/>
            <person name="Harris D.E."/>
            <person name="Gordon S.V."/>
            <person name="Eiglmeier K."/>
            <person name="Gas S."/>
            <person name="Barry C.E. III"/>
            <person name="Tekaia F."/>
            <person name="Badcock K."/>
            <person name="Basham D."/>
            <person name="Brown D."/>
            <person name="Chillingworth T."/>
            <person name="Connor R."/>
            <person name="Davies R.M."/>
            <person name="Devlin K."/>
            <person name="Feltwell T."/>
            <person name="Gentles S."/>
            <person name="Hamlin N."/>
            <person name="Holroyd S."/>
            <person name="Hornsby T."/>
            <person name="Jagels K."/>
            <person name="Krogh A."/>
            <person name="McLean J."/>
            <person name="Moule S."/>
            <person name="Murphy L.D."/>
            <person name="Oliver S."/>
            <person name="Osborne J."/>
            <person name="Quail M.A."/>
            <person name="Rajandream M.A."/>
            <person name="Rogers J."/>
            <person name="Rutter S."/>
            <person name="Seeger K."/>
            <person name="Skelton S."/>
            <person name="Squares S."/>
            <person name="Squares R."/>
            <person name="Sulston J.E."/>
            <person name="Taylor K."/>
            <person name="Whitehead S."/>
            <person name="Barrell B.G."/>
        </authorList>
    </citation>
    <scope>NUCLEOTIDE SEQUENCE [LARGE SCALE GENOMIC DNA]</scope>
    <source>
        <strain>ATCC 25618 / H37Rv</strain>
    </source>
</reference>
<reference key="2">
    <citation type="journal article" date="2011" name="Mol. Cell. Proteomics">
        <title>Proteogenomic analysis of Mycobacterium tuberculosis by high resolution mass spectrometry.</title>
        <authorList>
            <person name="Kelkar D.S."/>
            <person name="Kumar D."/>
            <person name="Kumar P."/>
            <person name="Balakrishnan L."/>
            <person name="Muthusamy B."/>
            <person name="Yadav A.K."/>
            <person name="Shrivastava P."/>
            <person name="Marimuthu A."/>
            <person name="Anand S."/>
            <person name="Sundaram H."/>
            <person name="Kingsbury R."/>
            <person name="Harsha H.C."/>
            <person name="Nair B."/>
            <person name="Prasad T.S."/>
            <person name="Chauhan D.S."/>
            <person name="Katoch K."/>
            <person name="Katoch V.M."/>
            <person name="Kumar P."/>
            <person name="Chaerkady R."/>
            <person name="Ramachandran S."/>
            <person name="Dash D."/>
            <person name="Pandey A."/>
        </authorList>
    </citation>
    <scope>IDENTIFICATION BY MASS SPECTROMETRY [LARGE SCALE ANALYSIS]</scope>
    <source>
        <strain>ATCC 25618 / H37Rv</strain>
    </source>
</reference>
<reference key="3">
    <citation type="journal article" date="2022" name="Microbiol. Spectr.">
        <title>M. tuberculosis AlkX encoded by rv3249c regulates a conserved alkane hydroxylase system that is important for replication in macrophages and biofilm formation.</title>
        <authorList>
            <person name="Stokas H."/>
            <person name="Rhodes H.L."/>
            <person name="Simmons M.B."/>
            <person name="Zhang R."/>
            <person name="Wright C.C."/>
            <person name="Purdy G.E."/>
        </authorList>
    </citation>
    <scope>FUNCTION</scope>
    <scope>DNA-BINDING</scope>
    <scope>ACTIVITY REGULATION</scope>
    <scope>DISRUPTION PHENOTYPE</scope>
    <source>
        <strain>H37Rv</strain>
    </source>
</reference>
<reference evidence="7" key="4">
    <citation type="journal article" date="2015" name="J. Biol. Chem.">
        <title>Structural basis for the regulation of the MmpL transporters of Mycobacterium tuberculosis.</title>
        <authorList>
            <person name="Delmar J.A."/>
            <person name="Chou T.H."/>
            <person name="Wright C.C."/>
            <person name="Licon M.H."/>
            <person name="Doh J.K."/>
            <person name="Radhakrishnan A."/>
            <person name="Kumar N."/>
            <person name="Lei H.T."/>
            <person name="Bolla J.R."/>
            <person name="Rajashankar K.R."/>
            <person name="Su C.C."/>
            <person name="Purdy G.E."/>
            <person name="Yu E.W."/>
        </authorList>
    </citation>
    <scope>X-RAY CRYSTALLOGRAPHY (3.59 ANGSTROMS)</scope>
    <scope>FUNCTION</scope>
    <scope>DNA-BINDING</scope>
    <scope>ACTIVITY REGULATION</scope>
    <scope>SUBUNIT</scope>
    <scope>DOMAIN</scope>
    <source>
        <strain>H37Rv</strain>
    </source>
</reference>
<evidence type="ECO:0000255" key="1">
    <source>
        <dbReference type="PROSITE-ProRule" id="PRU00335"/>
    </source>
</evidence>
<evidence type="ECO:0000269" key="2">
    <source>
    </source>
</evidence>
<evidence type="ECO:0000269" key="3">
    <source>
    </source>
</evidence>
<evidence type="ECO:0000303" key="4">
    <source>
    </source>
</evidence>
<evidence type="ECO:0000305" key="5"/>
<evidence type="ECO:0000312" key="6">
    <source>
        <dbReference type="EMBL" id="CCP46068.1"/>
    </source>
</evidence>
<evidence type="ECO:0007744" key="7">
    <source>
        <dbReference type="PDB" id="5D1W"/>
    </source>
</evidence>
<gene>
    <name evidence="4" type="primary">alkX</name>
    <name evidence="6" type="ordered locus">Rv3249c</name>
</gene>
<sequence>MSTPSATVAPVKRIPYAEASRALLRDSVLDAMRDLLLTRDWSAITLSDVARAAGISRQTIYNEFGSRQGLAQGYALRLADRLVDNVHASLDANVGNFYEAFLQGFRSFFAESAADPLVISLLTGVAKPDLLQLITTDSAPIITRASARLAPAFTDTWVATTDNDANVLSRAIVRLCLSYVSMPPEADHDVAADLARLITPFAERHGVINVP</sequence>
<organism>
    <name type="scientific">Mycobacterium tuberculosis (strain ATCC 25618 / H37Rv)</name>
    <dbReference type="NCBI Taxonomy" id="83332"/>
    <lineage>
        <taxon>Bacteria</taxon>
        <taxon>Bacillati</taxon>
        <taxon>Actinomycetota</taxon>
        <taxon>Actinomycetes</taxon>
        <taxon>Mycobacteriales</taxon>
        <taxon>Mycobacteriaceae</taxon>
        <taxon>Mycobacterium</taxon>
        <taxon>Mycobacterium tuberculosis complex</taxon>
    </lineage>
</organism>
<comment type="function">
    <text evidence="2 3">Represses the expression of the alkB-rubAB operon, which encodes the alkane hydroxylase AlkB and the rubredoxins RubA and RubB (PubMed:35938806). Acts by binding to the promoter region of the operon (PubMed:35938806). In addition, EMSA analysis show that AlkX can bind to the promoter region of mmpS1 and mmpL3 and to the intragenic region of mmpL11, suggesting that it may participate in the regulatory network that controls the expression of MmpL lipid transporters (PubMed:26396194).</text>
</comment>
<comment type="activity regulation">
    <text evidence="2 3">DNA-binding activity may be regulated by fatty acids.</text>
</comment>
<comment type="subunit">
    <text evidence="2">Homodimer.</text>
</comment>
<comment type="subcellular location">
    <subcellularLocation>
        <location evidence="5">Cytoplasm</location>
    </subcellularLocation>
</comment>
<comment type="domain">
    <text evidence="2">Contains an N-terminal DNA-binding domain and a C-terminal ligand-binding regulatory domain (PubMed:26396194). The C-terminal regulatory domain can bind saturated fatty acids (PubMed:26396194).</text>
</comment>
<comment type="disruption phenotype">
    <text evidence="3">Disruption of the gene affects the expression of about forty genes (PubMed:35938806). The mutant survives better than the wild-type strain inside macrophages (PubMed:35938806). It also has impaired biofilm formation, due to overexpression of the alkB-rubAB operon (PubMed:35938806). Mutant does not show significant difference in the transcription of mmpL3 and mmpL11 (PubMed:35938806).</text>
</comment>
<feature type="chain" id="PRO_0000458111" description="HTH-type transcriptional regulator AlkX">
    <location>
        <begin position="1"/>
        <end position="211"/>
    </location>
</feature>
<feature type="domain" description="HTH tetR-type" evidence="1">
    <location>
        <begin position="22"/>
        <end position="82"/>
    </location>
</feature>
<feature type="DNA-binding region" description="H-T-H motif" evidence="1">
    <location>
        <begin position="45"/>
        <end position="64"/>
    </location>
</feature>
<dbReference type="EMBL" id="AL123456">
    <property type="protein sequence ID" value="CCP46068.1"/>
    <property type="molecule type" value="Genomic_DNA"/>
</dbReference>
<dbReference type="RefSeq" id="NP_217766.1">
    <property type="nucleotide sequence ID" value="NC_000962.3"/>
</dbReference>
<dbReference type="RefSeq" id="WP_003417042.1">
    <property type="nucleotide sequence ID" value="NZ_NVQJ01000003.1"/>
</dbReference>
<dbReference type="PDB" id="5D1W">
    <property type="method" value="X-ray"/>
    <property type="resolution" value="3.59 A"/>
    <property type="chains" value="A/B/C/D/E/F=1-211"/>
</dbReference>
<dbReference type="PDBsum" id="5D1W"/>
<dbReference type="SMR" id="O05892"/>
<dbReference type="STRING" id="83332.Rv3249c"/>
<dbReference type="PaxDb" id="83332-Rv3249c"/>
<dbReference type="DNASU" id="888741"/>
<dbReference type="GeneID" id="888741"/>
<dbReference type="KEGG" id="mtu:Rv3249c"/>
<dbReference type="KEGG" id="mtv:RVBD_3249c"/>
<dbReference type="PATRIC" id="fig|83332.111.peg.3628"/>
<dbReference type="TubercuList" id="Rv3249c"/>
<dbReference type="eggNOG" id="COG1309">
    <property type="taxonomic scope" value="Bacteria"/>
</dbReference>
<dbReference type="InParanoid" id="O05892"/>
<dbReference type="OrthoDB" id="4371863at2"/>
<dbReference type="PhylomeDB" id="O05892"/>
<dbReference type="EvolutionaryTrace" id="O05892"/>
<dbReference type="Proteomes" id="UP000001584">
    <property type="component" value="Chromosome"/>
</dbReference>
<dbReference type="GO" id="GO:0005737">
    <property type="term" value="C:cytoplasm"/>
    <property type="evidence" value="ECO:0007669"/>
    <property type="project" value="UniProtKB-SubCell"/>
</dbReference>
<dbReference type="GO" id="GO:0003700">
    <property type="term" value="F:DNA-binding transcription factor activity"/>
    <property type="evidence" value="ECO:0000318"/>
    <property type="project" value="GO_Central"/>
</dbReference>
<dbReference type="GO" id="GO:0000976">
    <property type="term" value="F:transcription cis-regulatory region binding"/>
    <property type="evidence" value="ECO:0000318"/>
    <property type="project" value="GO_Central"/>
</dbReference>
<dbReference type="GO" id="GO:0006355">
    <property type="term" value="P:regulation of DNA-templated transcription"/>
    <property type="evidence" value="ECO:0000318"/>
    <property type="project" value="GO_Central"/>
</dbReference>
<dbReference type="Gene3D" id="1.10.357.10">
    <property type="entry name" value="Tetracycline Repressor, domain 2"/>
    <property type="match status" value="1"/>
</dbReference>
<dbReference type="InterPro" id="IPR040611">
    <property type="entry name" value="AlkX_C"/>
</dbReference>
<dbReference type="InterPro" id="IPR009057">
    <property type="entry name" value="Homeodomain-like_sf"/>
</dbReference>
<dbReference type="InterPro" id="IPR050109">
    <property type="entry name" value="HTH-type_TetR-like_transc_reg"/>
</dbReference>
<dbReference type="InterPro" id="IPR001647">
    <property type="entry name" value="HTH_TetR"/>
</dbReference>
<dbReference type="PANTHER" id="PTHR30055:SF234">
    <property type="entry name" value="HTH-TYPE TRANSCRIPTIONAL REGULATOR BETI"/>
    <property type="match status" value="1"/>
</dbReference>
<dbReference type="PANTHER" id="PTHR30055">
    <property type="entry name" value="HTH-TYPE TRANSCRIPTIONAL REGULATOR RUTR"/>
    <property type="match status" value="1"/>
</dbReference>
<dbReference type="Pfam" id="PF18556">
    <property type="entry name" value="TetR_C_35"/>
    <property type="match status" value="1"/>
</dbReference>
<dbReference type="Pfam" id="PF00440">
    <property type="entry name" value="TetR_N"/>
    <property type="match status" value="1"/>
</dbReference>
<dbReference type="PRINTS" id="PR00455">
    <property type="entry name" value="HTHTETR"/>
</dbReference>
<dbReference type="SUPFAM" id="SSF46689">
    <property type="entry name" value="Homeodomain-like"/>
    <property type="match status" value="1"/>
</dbReference>
<dbReference type="PROSITE" id="PS50977">
    <property type="entry name" value="HTH_TETR_2"/>
    <property type="match status" value="1"/>
</dbReference>
<protein>
    <recommendedName>
        <fullName evidence="5">HTH-type transcriptional regulator AlkX</fullName>
    </recommendedName>
</protein>
<accession>O05892</accession>
<accession>F2GKC5</accession>
<accession>I6XGQ1</accession>
<accession>L0TC92</accession>